<comment type="function">
    <text evidence="5 6 7">Transcriptional activator that binds with high affinity to the T-cell enhancer motif 5'-AACAAAG-3' motif (PubMed:8404853). Required for IL17A-producing Vgamma2-positive gamma-delta T-cell maturation and development, via binding to regulator loci of RORC to modulate expression (PubMed:23562159). Involved in skeletal myoblast differentiation by promoting gene expression of CALD1 (PubMed:26291311).</text>
</comment>
<comment type="subunit">
    <text evidence="1">Interacts with UBE2I. Interacts with HDAC1; interaction inhibits the transcriptional activator activity.</text>
</comment>
<comment type="interaction">
    <interactant intactId="EBI-6262177">
        <id>Q06831</id>
    </interactant>
    <interactant intactId="EBI-533224">
        <id>P15884</id>
        <label>TCF4</label>
    </interactant>
    <organismsDiffer>true</organismsDiffer>
    <experiments>2</experiments>
</comment>
<comment type="subcellular location">
    <subcellularLocation>
        <location evidence="1">Nucleus</location>
    </subcellularLocation>
</comment>
<comment type="tissue specificity">
    <text evidence="4 7">Expressed in both gamma-delta T-cells and Cd4+ Cd8+ double-positive (DP) alpha-beta T-cells (PubMed:17218525). Expressed in the ovaries and the thymus (PubMed:17218525, PubMed:8404853).</text>
</comment>
<comment type="developmental stage">
    <text evidence="8">Expressed in molar and incisor tooth germs at 14.5 dpc.</text>
</comment>
<comment type="domain">
    <text evidence="1">The 9aaTAD motif is a transactivation domain present in a large number of yeast and animal transcription factors.</text>
</comment>
<comment type="PTM">
    <text evidence="1">Acetylation at Lys-95 by KAT5 promotes the transcription activator activity and is required during myoblast differentiation (By similarity). Acetylation by KAT5 abolishes the interaction between SOX4 and HDAC1 and switches SOX4 into a transcriptional activator (By similarity).</text>
</comment>
<comment type="disruption phenotype">
    <text evidence="5">In T-cell-specific knockout mice, loss of mature Il17a-producing Vgamma2-positive gamma-delta T-cells and reduction of Rorc expression in immature Vgamma2-positive thymocytes (PubMed:23562159). In a mouse model for psoriasis, dermal inflammation induced by skin application of TLR7 synthetic ligand imiquimod is substantially reduced due to the absence of Vgamma2-positive gamma-delta T-cells (PubMed:23562159).</text>
</comment>
<comment type="miscellaneous">
    <text evidence="5">May be involved in the T-cell immune response in the psoriasis-like disease which is induced in mice by the application of the TLR7 ligand Imiquimod to skin.</text>
</comment>
<feature type="chain" id="PRO_0000048725" description="Transcription factor SOX-4">
    <location>
        <begin position="1"/>
        <end position="440"/>
    </location>
</feature>
<feature type="DNA-binding region" description="HMG box" evidence="2">
    <location>
        <begin position="59"/>
        <end position="127"/>
    </location>
</feature>
<feature type="region of interest" description="Disordered" evidence="3">
    <location>
        <begin position="1"/>
        <end position="58"/>
    </location>
</feature>
<feature type="region of interest" description="Disordered" evidence="3">
    <location>
        <begin position="128"/>
        <end position="211"/>
    </location>
</feature>
<feature type="region of interest" description="Disordered" evidence="3">
    <location>
        <begin position="234"/>
        <end position="258"/>
    </location>
</feature>
<feature type="region of interest" description="Disordered" evidence="3">
    <location>
        <begin position="272"/>
        <end position="382"/>
    </location>
</feature>
<feature type="short sequence motif" description="9aaTAD" evidence="1">
    <location>
        <begin position="392"/>
        <end position="400"/>
    </location>
</feature>
<feature type="compositionally biased region" description="Polar residues" evidence="3">
    <location>
        <begin position="1"/>
        <end position="10"/>
    </location>
</feature>
<feature type="compositionally biased region" description="Low complexity" evidence="3">
    <location>
        <begin position="31"/>
        <end position="44"/>
    </location>
</feature>
<feature type="compositionally biased region" description="Low complexity" evidence="3">
    <location>
        <begin position="136"/>
        <end position="148"/>
    </location>
</feature>
<feature type="compositionally biased region" description="Low complexity" evidence="3">
    <location>
        <begin position="157"/>
        <end position="166"/>
    </location>
</feature>
<feature type="compositionally biased region" description="Low complexity" evidence="3">
    <location>
        <begin position="234"/>
        <end position="253"/>
    </location>
</feature>
<feature type="compositionally biased region" description="Low complexity" evidence="3">
    <location>
        <begin position="304"/>
        <end position="322"/>
    </location>
</feature>
<feature type="compositionally biased region" description="Low complexity" evidence="3">
    <location>
        <begin position="330"/>
        <end position="362"/>
    </location>
</feature>
<feature type="compositionally biased region" description="Acidic residues" evidence="3">
    <location>
        <begin position="363"/>
        <end position="372"/>
    </location>
</feature>
<feature type="compositionally biased region" description="Low complexity" evidence="3">
    <location>
        <begin position="373"/>
        <end position="382"/>
    </location>
</feature>
<feature type="modified residue" description="N6-acetyllysine" evidence="1">
    <location>
        <position position="95"/>
    </location>
</feature>
<feature type="sequence conflict" description="In Ref. 1; CAA49779." evidence="11" ref="1">
    <original>S</original>
    <variation>T</variation>
    <location>
        <position position="175"/>
    </location>
</feature>
<feature type="sequence conflict" description="In Ref. 1; CAA49779." evidence="11" ref="1">
    <original>A</original>
    <variation>T</variation>
    <location>
        <position position="179"/>
    </location>
</feature>
<feature type="sequence conflict" description="In Ref. 1; CAA49779." evidence="11" ref="1">
    <original>SA</original>
    <variation>QL</variation>
    <location>
        <begin position="235"/>
        <end position="236"/>
    </location>
</feature>
<feature type="sequence conflict" description="In Ref. 1; CAA49779." evidence="11" ref="1">
    <original>R</original>
    <variation>H</variation>
    <location>
        <position position="263"/>
    </location>
</feature>
<feature type="sequence conflict" description="In Ref. 1; CAA49779." evidence="11" ref="1">
    <original>S</original>
    <variation>C</variation>
    <location>
        <position position="283"/>
    </location>
</feature>
<feature type="helix" evidence="13">
    <location>
        <begin position="65"/>
        <end position="78"/>
    </location>
</feature>
<feature type="helix" evidence="13">
    <location>
        <begin position="86"/>
        <end position="99"/>
    </location>
</feature>
<feature type="helix" evidence="13">
    <location>
        <begin position="102"/>
        <end position="122"/>
    </location>
</feature>
<feature type="strand" evidence="13">
    <location>
        <begin position="123"/>
        <end position="125"/>
    </location>
</feature>
<protein>
    <recommendedName>
        <fullName evidence="11">Transcription factor SOX-4</fullName>
    </recommendedName>
</protein>
<accession>Q06831</accession>
<accession>Q5SW95</accession>
<dbReference type="EMBL" id="X70298">
    <property type="protein sequence ID" value="CAA49779.1"/>
    <property type="molecule type" value="mRNA"/>
</dbReference>
<dbReference type="EMBL" id="AL606511">
    <property type="status" value="NOT_ANNOTATED_CDS"/>
    <property type="molecule type" value="Genomic_DNA"/>
</dbReference>
<dbReference type="EMBL" id="CH466561">
    <property type="protein sequence ID" value="EDL32406.1"/>
    <property type="molecule type" value="Genomic_DNA"/>
</dbReference>
<dbReference type="EMBL" id="BC052736">
    <property type="protein sequence ID" value="AAH52736.1"/>
    <property type="molecule type" value="mRNA"/>
</dbReference>
<dbReference type="EMBL" id="U70440">
    <property type="protein sequence ID" value="AAC52858.1"/>
    <property type="molecule type" value="mRNA"/>
</dbReference>
<dbReference type="CCDS" id="CCDS26411.1"/>
<dbReference type="PIR" id="S37303">
    <property type="entry name" value="S37303"/>
</dbReference>
<dbReference type="RefSeq" id="NP_033264.2">
    <property type="nucleotide sequence ID" value="NM_009238.3"/>
</dbReference>
<dbReference type="PDB" id="3U2B">
    <property type="method" value="X-ray"/>
    <property type="resolution" value="2.40 A"/>
    <property type="chains" value="C=57-135"/>
</dbReference>
<dbReference type="PDBsum" id="3U2B"/>
<dbReference type="SMR" id="Q06831"/>
<dbReference type="FunCoup" id="Q06831">
    <property type="interactions" value="701"/>
</dbReference>
<dbReference type="IntAct" id="Q06831">
    <property type="interactions" value="5"/>
</dbReference>
<dbReference type="STRING" id="10090.ENSMUSP00000100013"/>
<dbReference type="GlyGen" id="Q06831">
    <property type="glycosylation" value="3 sites"/>
</dbReference>
<dbReference type="iPTMnet" id="Q06831"/>
<dbReference type="PhosphoSitePlus" id="Q06831"/>
<dbReference type="jPOST" id="Q06831"/>
<dbReference type="PaxDb" id="10090-ENSMUSP00000100013"/>
<dbReference type="PeptideAtlas" id="Q06831"/>
<dbReference type="ProteomicsDB" id="261116"/>
<dbReference type="Pumba" id="Q06831"/>
<dbReference type="Antibodypedia" id="25243">
    <property type="antibodies" value="293 antibodies from 36 providers"/>
</dbReference>
<dbReference type="DNASU" id="20677"/>
<dbReference type="Ensembl" id="ENSMUST00000067230.6">
    <property type="protein sequence ID" value="ENSMUSP00000100013.2"/>
    <property type="gene ID" value="ENSMUSG00000076431.5"/>
</dbReference>
<dbReference type="GeneID" id="20677"/>
<dbReference type="KEGG" id="mmu:20677"/>
<dbReference type="UCSC" id="uc007pyk.1">
    <property type="organism name" value="mouse"/>
</dbReference>
<dbReference type="AGR" id="MGI:98366"/>
<dbReference type="CTD" id="6659"/>
<dbReference type="MGI" id="MGI:98366">
    <property type="gene designation" value="Sox4"/>
</dbReference>
<dbReference type="VEuPathDB" id="HostDB:ENSMUSG00000076431"/>
<dbReference type="eggNOG" id="KOG0527">
    <property type="taxonomic scope" value="Eukaryota"/>
</dbReference>
<dbReference type="GeneTree" id="ENSGT00940000161470"/>
<dbReference type="HOGENOM" id="CLU_043342_0_0_1"/>
<dbReference type="InParanoid" id="Q06831"/>
<dbReference type="OMA" id="LYKPRGA"/>
<dbReference type="OrthoDB" id="6247875at2759"/>
<dbReference type="Reactome" id="R-MMU-3769402">
    <property type="pathway name" value="Deactivation of the beta-catenin transactivating complex"/>
</dbReference>
<dbReference type="BioGRID-ORCS" id="20677">
    <property type="hits" value="11 hits in 80 CRISPR screens"/>
</dbReference>
<dbReference type="PRO" id="PR:Q06831"/>
<dbReference type="Proteomes" id="UP000000589">
    <property type="component" value="Chromosome 13"/>
</dbReference>
<dbReference type="RNAct" id="Q06831">
    <property type="molecule type" value="protein"/>
</dbReference>
<dbReference type="Bgee" id="ENSMUSG00000076431">
    <property type="expression patterns" value="Expressed in medial ganglionic eminence and 312 other cell types or tissues"/>
</dbReference>
<dbReference type="GO" id="GO:0005737">
    <property type="term" value="C:cytoplasm"/>
    <property type="evidence" value="ECO:0000314"/>
    <property type="project" value="MGI"/>
</dbReference>
<dbReference type="GO" id="GO:0005739">
    <property type="term" value="C:mitochondrion"/>
    <property type="evidence" value="ECO:0000250"/>
    <property type="project" value="UniProtKB"/>
</dbReference>
<dbReference type="GO" id="GO:0005654">
    <property type="term" value="C:nucleoplasm"/>
    <property type="evidence" value="ECO:0007669"/>
    <property type="project" value="Ensembl"/>
</dbReference>
<dbReference type="GO" id="GO:0005634">
    <property type="term" value="C:nucleus"/>
    <property type="evidence" value="ECO:0000314"/>
    <property type="project" value="UniProtKB"/>
</dbReference>
<dbReference type="GO" id="GO:0005667">
    <property type="term" value="C:transcription regulator complex"/>
    <property type="evidence" value="ECO:0000314"/>
    <property type="project" value="MGI"/>
</dbReference>
<dbReference type="GO" id="GO:0003677">
    <property type="term" value="F:DNA binding"/>
    <property type="evidence" value="ECO:0000314"/>
    <property type="project" value="UniProtKB"/>
</dbReference>
<dbReference type="GO" id="GO:0001228">
    <property type="term" value="F:DNA-binding transcription activator activity, RNA polymerase II-specific"/>
    <property type="evidence" value="ECO:0000314"/>
    <property type="project" value="GO_Central"/>
</dbReference>
<dbReference type="GO" id="GO:0003700">
    <property type="term" value="F:DNA-binding transcription factor activity"/>
    <property type="evidence" value="ECO:0000314"/>
    <property type="project" value="UniProtKB"/>
</dbReference>
<dbReference type="GO" id="GO:0000981">
    <property type="term" value="F:DNA-binding transcription factor activity, RNA polymerase II-specific"/>
    <property type="evidence" value="ECO:0000314"/>
    <property type="project" value="MGI"/>
</dbReference>
<dbReference type="GO" id="GO:0035198">
    <property type="term" value="F:miRNA binding"/>
    <property type="evidence" value="ECO:0000314"/>
    <property type="project" value="MGI"/>
</dbReference>
<dbReference type="GO" id="GO:0000978">
    <property type="term" value="F:RNA polymerase II cis-regulatory region sequence-specific DNA binding"/>
    <property type="evidence" value="ECO:0000314"/>
    <property type="project" value="UniProtKB"/>
</dbReference>
<dbReference type="GO" id="GO:0000976">
    <property type="term" value="F:transcription cis-regulatory region binding"/>
    <property type="evidence" value="ECO:0000314"/>
    <property type="project" value="UniProtKB"/>
</dbReference>
<dbReference type="GO" id="GO:0035910">
    <property type="term" value="P:ascending aorta morphogenesis"/>
    <property type="evidence" value="ECO:0000315"/>
    <property type="project" value="BHF-UCL"/>
</dbReference>
<dbReference type="GO" id="GO:0003289">
    <property type="term" value="P:atrial septum primum morphogenesis"/>
    <property type="evidence" value="ECO:0000315"/>
    <property type="project" value="BHF-UCL"/>
</dbReference>
<dbReference type="GO" id="GO:0003215">
    <property type="term" value="P:cardiac right ventricle morphogenesis"/>
    <property type="evidence" value="ECO:0000315"/>
    <property type="project" value="BHF-UCL"/>
</dbReference>
<dbReference type="GO" id="GO:0071333">
    <property type="term" value="P:cellular response to glucose stimulus"/>
    <property type="evidence" value="ECO:0000315"/>
    <property type="project" value="UniProtKB"/>
</dbReference>
<dbReference type="GO" id="GO:0031018">
    <property type="term" value="P:endocrine pancreas development"/>
    <property type="evidence" value="ECO:0000315"/>
    <property type="project" value="MGI"/>
</dbReference>
<dbReference type="GO" id="GO:0010467">
    <property type="term" value="P:gene expression"/>
    <property type="evidence" value="ECO:0000314"/>
    <property type="project" value="MGI"/>
</dbReference>
<dbReference type="GO" id="GO:0021782">
    <property type="term" value="P:glial cell development"/>
    <property type="evidence" value="ECO:0000315"/>
    <property type="project" value="UniProtKB"/>
</dbReference>
<dbReference type="GO" id="GO:0014009">
    <property type="term" value="P:glial cell proliferation"/>
    <property type="evidence" value="ECO:0000315"/>
    <property type="project" value="UniProtKB"/>
</dbReference>
<dbReference type="GO" id="GO:0042593">
    <property type="term" value="P:glucose homeostasis"/>
    <property type="evidence" value="ECO:0000315"/>
    <property type="project" value="UniProtKB"/>
</dbReference>
<dbReference type="GO" id="GO:0007507">
    <property type="term" value="P:heart development"/>
    <property type="evidence" value="ECO:0000315"/>
    <property type="project" value="BHF-UCL"/>
</dbReference>
<dbReference type="GO" id="GO:0061484">
    <property type="term" value="P:hematopoietic stem cell homeostasis"/>
    <property type="evidence" value="ECO:0000315"/>
    <property type="project" value="MGI"/>
</dbReference>
<dbReference type="GO" id="GO:0060993">
    <property type="term" value="P:kidney morphogenesis"/>
    <property type="evidence" value="ECO:0000315"/>
    <property type="project" value="BHF-UCL"/>
</dbReference>
<dbReference type="GO" id="GO:0060485">
    <property type="term" value="P:mesenchyme development"/>
    <property type="evidence" value="ECO:0000315"/>
    <property type="project" value="UniProtKB"/>
</dbReference>
<dbReference type="GO" id="GO:0003183">
    <property type="term" value="P:mitral valve morphogenesis"/>
    <property type="evidence" value="ECO:0000315"/>
    <property type="project" value="BHF-UCL"/>
</dbReference>
<dbReference type="GO" id="GO:0045662">
    <property type="term" value="P:negative regulation of myoblast differentiation"/>
    <property type="evidence" value="ECO:0007669"/>
    <property type="project" value="Ensembl"/>
</dbReference>
<dbReference type="GO" id="GO:0000122">
    <property type="term" value="P:negative regulation of transcription by RNA polymerase II"/>
    <property type="evidence" value="ECO:0007669"/>
    <property type="project" value="Ensembl"/>
</dbReference>
<dbReference type="GO" id="GO:0007399">
    <property type="term" value="P:nervous system development"/>
    <property type="evidence" value="ECO:0000315"/>
    <property type="project" value="UniProtKB"/>
</dbReference>
<dbReference type="GO" id="GO:0060563">
    <property type="term" value="P:neuroepithelial cell differentiation"/>
    <property type="evidence" value="ECO:0000315"/>
    <property type="project" value="UniProtKB"/>
</dbReference>
<dbReference type="GO" id="GO:0003357">
    <property type="term" value="P:noradrenergic neuron differentiation"/>
    <property type="evidence" value="ECO:0000315"/>
    <property type="project" value="UniProtKB"/>
</dbReference>
<dbReference type="GO" id="GO:0043065">
    <property type="term" value="P:positive regulation of apoptotic process"/>
    <property type="evidence" value="ECO:0007669"/>
    <property type="project" value="Ensembl"/>
</dbReference>
<dbReference type="GO" id="GO:0090263">
    <property type="term" value="P:positive regulation of canonical Wnt signaling pathway"/>
    <property type="evidence" value="ECO:0000314"/>
    <property type="project" value="UniProtKB"/>
</dbReference>
<dbReference type="GO" id="GO:0008284">
    <property type="term" value="P:positive regulation of cell population proliferation"/>
    <property type="evidence" value="ECO:0000250"/>
    <property type="project" value="UniProtKB"/>
</dbReference>
<dbReference type="GO" id="GO:0045893">
    <property type="term" value="P:positive regulation of DNA-templated transcription"/>
    <property type="evidence" value="ECO:0000314"/>
    <property type="project" value="UniProtKB"/>
</dbReference>
<dbReference type="GO" id="GO:0045588">
    <property type="term" value="P:positive regulation of gamma-delta T cell differentiation"/>
    <property type="evidence" value="ECO:0000315"/>
    <property type="project" value="UniProtKB"/>
</dbReference>
<dbReference type="GO" id="GO:0032024">
    <property type="term" value="P:positive regulation of insulin secretion"/>
    <property type="evidence" value="ECO:0000315"/>
    <property type="project" value="UniProtKB"/>
</dbReference>
<dbReference type="GO" id="GO:0045663">
    <property type="term" value="P:positive regulation of myoblast differentiation"/>
    <property type="evidence" value="ECO:0000314"/>
    <property type="project" value="UniProtKB"/>
</dbReference>
<dbReference type="GO" id="GO:0045944">
    <property type="term" value="P:positive regulation of transcription by RNA polymerase II"/>
    <property type="evidence" value="ECO:0000314"/>
    <property type="project" value="UniProtKB"/>
</dbReference>
<dbReference type="GO" id="GO:0002328">
    <property type="term" value="P:pro-B cell differentiation"/>
    <property type="evidence" value="ECO:0000315"/>
    <property type="project" value="BHF-UCL"/>
</dbReference>
<dbReference type="GO" id="GO:0050821">
    <property type="term" value="P:protein stabilization"/>
    <property type="evidence" value="ECO:0000315"/>
    <property type="project" value="BHF-UCL"/>
</dbReference>
<dbReference type="GO" id="GO:0043516">
    <property type="term" value="P:regulation of DNA damage response, signal transduction by p53 class mediator"/>
    <property type="evidence" value="ECO:0007669"/>
    <property type="project" value="Ensembl"/>
</dbReference>
<dbReference type="GO" id="GO:0006355">
    <property type="term" value="P:regulation of DNA-templated transcription"/>
    <property type="evidence" value="ECO:0000315"/>
    <property type="project" value="UniProtKB"/>
</dbReference>
<dbReference type="GO" id="GO:0035019">
    <property type="term" value="P:somatic stem cell population maintenance"/>
    <property type="evidence" value="ECO:0000314"/>
    <property type="project" value="MGI"/>
</dbReference>
<dbReference type="GO" id="GO:0021510">
    <property type="term" value="P:spinal cord development"/>
    <property type="evidence" value="ECO:0000315"/>
    <property type="project" value="UniProtKB"/>
</dbReference>
<dbReference type="GO" id="GO:0048485">
    <property type="term" value="P:sympathetic nervous system development"/>
    <property type="evidence" value="ECO:0000315"/>
    <property type="project" value="UniProtKB"/>
</dbReference>
<dbReference type="GO" id="GO:0030217">
    <property type="term" value="P:T cell differentiation"/>
    <property type="evidence" value="ECO:0000315"/>
    <property type="project" value="BHF-UCL"/>
</dbReference>
<dbReference type="GO" id="GO:0060412">
    <property type="term" value="P:ventricular septum morphogenesis"/>
    <property type="evidence" value="ECO:0000315"/>
    <property type="project" value="BHF-UCL"/>
</dbReference>
<dbReference type="CDD" id="cd22029">
    <property type="entry name" value="HMG-box_SoxC"/>
    <property type="match status" value="1"/>
</dbReference>
<dbReference type="FunFam" id="1.10.30.10:FF:000007">
    <property type="entry name" value="Transcription factor SOX"/>
    <property type="match status" value="1"/>
</dbReference>
<dbReference type="Gene3D" id="1.10.30.10">
    <property type="entry name" value="High mobility group box domain"/>
    <property type="match status" value="1"/>
</dbReference>
<dbReference type="InterPro" id="IPR009071">
    <property type="entry name" value="HMG_box_dom"/>
</dbReference>
<dbReference type="InterPro" id="IPR036910">
    <property type="entry name" value="HMG_box_dom_sf"/>
</dbReference>
<dbReference type="InterPro" id="IPR017386">
    <property type="entry name" value="SOX-12/11/4"/>
</dbReference>
<dbReference type="InterPro" id="IPR050140">
    <property type="entry name" value="SRY-related_HMG-box_TF-like"/>
</dbReference>
<dbReference type="PANTHER" id="PTHR10270">
    <property type="entry name" value="SOX TRANSCRIPTION FACTOR"/>
    <property type="match status" value="1"/>
</dbReference>
<dbReference type="PANTHER" id="PTHR10270:SF27">
    <property type="entry name" value="TRANSCRIPTION FACTOR SOX-4"/>
    <property type="match status" value="1"/>
</dbReference>
<dbReference type="Pfam" id="PF00505">
    <property type="entry name" value="HMG_box"/>
    <property type="match status" value="1"/>
</dbReference>
<dbReference type="PIRSF" id="PIRSF038098">
    <property type="entry name" value="SOX-12/11/4a"/>
    <property type="match status" value="1"/>
</dbReference>
<dbReference type="SMART" id="SM00398">
    <property type="entry name" value="HMG"/>
    <property type="match status" value="1"/>
</dbReference>
<dbReference type="SUPFAM" id="SSF47095">
    <property type="entry name" value="HMG-box"/>
    <property type="match status" value="1"/>
</dbReference>
<dbReference type="PROSITE" id="PS50118">
    <property type="entry name" value="HMG_BOX_2"/>
    <property type="match status" value="1"/>
</dbReference>
<organism>
    <name type="scientific">Mus musculus</name>
    <name type="common">Mouse</name>
    <dbReference type="NCBI Taxonomy" id="10090"/>
    <lineage>
        <taxon>Eukaryota</taxon>
        <taxon>Metazoa</taxon>
        <taxon>Chordata</taxon>
        <taxon>Craniata</taxon>
        <taxon>Vertebrata</taxon>
        <taxon>Euteleostomi</taxon>
        <taxon>Mammalia</taxon>
        <taxon>Eutheria</taxon>
        <taxon>Euarchontoglires</taxon>
        <taxon>Glires</taxon>
        <taxon>Rodentia</taxon>
        <taxon>Myomorpha</taxon>
        <taxon>Muroidea</taxon>
        <taxon>Muridae</taxon>
        <taxon>Murinae</taxon>
        <taxon>Mus</taxon>
        <taxon>Mus</taxon>
    </lineage>
</organism>
<proteinExistence type="evidence at protein level"/>
<reference key="1">
    <citation type="journal article" date="1993" name="EMBO J.">
        <title>Sox-4, an Sry-like HMG box protein, is a transcriptional activator in lymphocytes.</title>
        <authorList>
            <person name="van de Wetering M."/>
            <person name="Oosterwegel M."/>
            <person name="van Norren K."/>
            <person name="Clevers H.C."/>
        </authorList>
    </citation>
    <scope>NUCLEOTIDE SEQUENCE [MRNA]</scope>
    <scope>FUNCTION</scope>
    <scope>TISSUE SPECIFICITY</scope>
</reference>
<reference key="2">
    <citation type="journal article" date="1993" name="Nucleic Acids Res.">
        <title>The murine Sox-4 protein is encoded on a single exon.</title>
        <authorList>
            <person name="Schilham M.W."/>
            <person name="van Eijk M."/>
            <person name="van de Wetering M."/>
            <person name="Clevers H.C."/>
        </authorList>
    </citation>
    <scope>NUCLEOTIDE SEQUENCE [MRNA]</scope>
</reference>
<reference key="3">
    <citation type="journal article" date="2009" name="PLoS Biol.">
        <title>Lineage-specific biology revealed by a finished genome assembly of the mouse.</title>
        <authorList>
            <person name="Church D.M."/>
            <person name="Goodstadt L."/>
            <person name="Hillier L.W."/>
            <person name="Zody M.C."/>
            <person name="Goldstein S."/>
            <person name="She X."/>
            <person name="Bult C.J."/>
            <person name="Agarwala R."/>
            <person name="Cherry J.L."/>
            <person name="DiCuccio M."/>
            <person name="Hlavina W."/>
            <person name="Kapustin Y."/>
            <person name="Meric P."/>
            <person name="Maglott D."/>
            <person name="Birtle Z."/>
            <person name="Marques A.C."/>
            <person name="Graves T."/>
            <person name="Zhou S."/>
            <person name="Teague B."/>
            <person name="Potamousis K."/>
            <person name="Churas C."/>
            <person name="Place M."/>
            <person name="Herschleb J."/>
            <person name="Runnheim R."/>
            <person name="Forrest D."/>
            <person name="Amos-Landgraf J."/>
            <person name="Schwartz D.C."/>
            <person name="Cheng Z."/>
            <person name="Lindblad-Toh K."/>
            <person name="Eichler E.E."/>
            <person name="Ponting C.P."/>
        </authorList>
    </citation>
    <scope>NUCLEOTIDE SEQUENCE [LARGE SCALE GENOMIC DNA]</scope>
    <source>
        <strain>C57BL/6J</strain>
    </source>
</reference>
<reference key="4">
    <citation type="submission" date="2005-09" db="EMBL/GenBank/DDBJ databases">
        <authorList>
            <person name="Mural R.J."/>
            <person name="Adams M.D."/>
            <person name="Myers E.W."/>
            <person name="Smith H.O."/>
            <person name="Venter J.C."/>
        </authorList>
    </citation>
    <scope>NUCLEOTIDE SEQUENCE [LARGE SCALE GENOMIC DNA]</scope>
</reference>
<reference key="5">
    <citation type="journal article" date="2004" name="Genome Res.">
        <title>The status, quality, and expansion of the NIH full-length cDNA project: the Mammalian Gene Collection (MGC).</title>
        <authorList>
            <consortium name="The MGC Project Team"/>
        </authorList>
    </citation>
    <scope>NUCLEOTIDE SEQUENCE [LARGE SCALE MRNA]</scope>
    <source>
        <strain>C57BL/6J</strain>
        <tissue>Brain</tissue>
    </source>
</reference>
<reference key="6">
    <citation type="journal article" date="1996" name="Genomics">
        <title>Numerous members of the Sox family of HMG box-containing genes are expressed in developing mouse teeth.</title>
        <authorList>
            <person name="Stock D.W."/>
            <person name="Buchanan A.V."/>
            <person name="Zhao Z."/>
            <person name="Weiss K.M."/>
        </authorList>
    </citation>
    <scope>NUCLEOTIDE SEQUENCE [MRNA] OF 69-122</scope>
    <scope>DEVELOPMENTAL STAGE</scope>
    <source>
        <strain>Swiss Webster</strain>
        <tissue>Embryonic tooth</tissue>
    </source>
</reference>
<reference key="7">
    <citation type="journal article" date="2004" name="Mol. Cell. Proteomics">
        <title>Phosphoproteomic analysis of the developing mouse brain.</title>
        <authorList>
            <person name="Ballif B.A."/>
            <person name="Villen J."/>
            <person name="Beausoleil S.A."/>
            <person name="Schwartz D."/>
            <person name="Gygi S.P."/>
        </authorList>
    </citation>
    <scope>IDENTIFICATION BY MASS SPECTROMETRY [LARGE SCALE ANALYSIS]</scope>
    <source>
        <tissue>Embryonic brain</tissue>
    </source>
</reference>
<reference key="8">
    <citation type="journal article" date="2007" name="Science">
        <title>Regulation of gammadelta versus alphabeta T lymphocyte differentiation by the transcription factor SOX13.</title>
        <authorList>
            <person name="Melichar H.J."/>
            <person name="Narayan K."/>
            <person name="Der S.D."/>
            <person name="Hiraoka Y."/>
            <person name="Gardiol N."/>
            <person name="Jeannet G."/>
            <person name="Held W."/>
            <person name="Chambers C.A."/>
            <person name="Kang J."/>
        </authorList>
    </citation>
    <scope>TISSUE SPECIFICITY</scope>
</reference>
<reference key="9">
    <citation type="journal article" date="2013" name="Immunity">
        <title>A network of high-mobility group box transcription factors programs innate interleukin-17 production.</title>
        <authorList>
            <consortium name="Immunological Genome Project Consortium"/>
            <person name="Malhotra N."/>
            <person name="Narayan K."/>
            <person name="Cho O.H."/>
            <person name="Sylvia K.E."/>
            <person name="Yin C."/>
            <person name="Melichar H."/>
            <person name="Rashighi M."/>
            <person name="Lefebvre V."/>
            <person name="Harris J.E."/>
            <person name="Berg L.J."/>
            <person name="Kang J."/>
        </authorList>
    </citation>
    <scope>FUNCTION</scope>
    <scope>DISRUPTION PHENOTYPE</scope>
</reference>
<reference key="10">
    <citation type="journal article" date="2015" name="Cell Death Dis.">
        <title>KAT5-mediated SOX4 acetylation orchestrates chromatin remodeling during myoblast differentiation.</title>
        <authorList>
            <person name="Jang S.M."/>
            <person name="Kim J.W."/>
            <person name="Kim C.H."/>
            <person name="An J.H."/>
            <person name="Johnson A."/>
            <person name="Song P.I."/>
            <person name="Rhee S."/>
            <person name="Choi K.H."/>
        </authorList>
    </citation>
    <scope>FUNCTION</scope>
</reference>
<evidence type="ECO:0000250" key="1">
    <source>
        <dbReference type="UniProtKB" id="Q06945"/>
    </source>
</evidence>
<evidence type="ECO:0000255" key="2">
    <source>
        <dbReference type="PROSITE-ProRule" id="PRU00267"/>
    </source>
</evidence>
<evidence type="ECO:0000256" key="3">
    <source>
        <dbReference type="SAM" id="MobiDB-lite"/>
    </source>
</evidence>
<evidence type="ECO:0000269" key="4">
    <source>
    </source>
</evidence>
<evidence type="ECO:0000269" key="5">
    <source>
    </source>
</evidence>
<evidence type="ECO:0000269" key="6">
    <source>
    </source>
</evidence>
<evidence type="ECO:0000269" key="7">
    <source>
    </source>
</evidence>
<evidence type="ECO:0000269" key="8">
    <source>
    </source>
</evidence>
<evidence type="ECO:0000303" key="9">
    <source>
    </source>
</evidence>
<evidence type="ECO:0000303" key="10">
    <source>
    </source>
</evidence>
<evidence type="ECO:0000305" key="11"/>
<evidence type="ECO:0000312" key="12">
    <source>
        <dbReference type="MGI" id="MGI:98366"/>
    </source>
</evidence>
<evidence type="ECO:0007829" key="13">
    <source>
        <dbReference type="PDB" id="3U2B"/>
    </source>
</evidence>
<sequence length="440" mass="45044">MVQQTNNAENTEALLAGESSDSGAGLELGIASSPTPGSTASTGGKADDPSWCKTPSGHIKRPMNAFMVWSQIERRKIMEQSPDMHNAEISKRLGKRWKLLKDSDKIPFIQEAERLRLKHMADYPDYKYRPRKKVKSGNAGAGSAATAKPGEKGDKVAGSSGHAGSSHAGGGAGGSSKPAPKKSCGPKVAGSSVGKPHAKLVPAGGSKAAASFSPEQAALLPLGEPTAVYKVRTPSAATPAASSSPSSALATPAKHPADKKVKRVYLFGSLGASASPVGGLGASADPSDPLGLYEDGGPGCSPDGRSLSGRSSAASSPAASRSPADHRGYASLRAASPAPSSAPSHASSSLSSSSSSSSGSSSSDDEFEDDLLDLNPSSNFESMSLGSFSSSSALDRDLDFNFEPGSGSHFEFPDYCTPEVSEMISGDWLESSISNLVFTY</sequence>
<gene>
    <name evidence="9 12" type="primary">Sox4</name>
    <name evidence="10" type="synonym">Sox-4</name>
</gene>
<name>SOX4_MOUSE</name>
<keyword id="KW-0002">3D-structure</keyword>
<keyword id="KW-0007">Acetylation</keyword>
<keyword id="KW-0010">Activator</keyword>
<keyword id="KW-0238">DNA-binding</keyword>
<keyword id="KW-0539">Nucleus</keyword>
<keyword id="KW-1185">Reference proteome</keyword>
<keyword id="KW-0804">Transcription</keyword>
<keyword id="KW-0805">Transcription regulation</keyword>